<sequence>MAKTYDYLFKLLLIGDSGVGKTCLLFRFSEDAFNTTFISTIGIDFKIRTVELDGKKIKLQIWDTAGQERFRTITTAYYRGAMGIMKVYDITNEKSFDNIKNWIRNIEEHASSDVERMILGNKCDMNEKRQVSKERGEKLAIDYGIKFLETSAKSSINVEEAFITLARDIMTKLNKKMNENSLQEAVDKLKSPPKKPSQKKKQLSFRCSLL</sequence>
<accession>P22128</accession>
<proteinExistence type="evidence at transcript level"/>
<name>RAB8_DIPOM</name>
<feature type="chain" id="PRO_0000121137" description="Ras-related protein Rab-8">
    <location>
        <begin position="1"/>
        <end position="207"/>
    </location>
</feature>
<feature type="propeptide" id="PRO_0000370804" description="Removed in mature form" evidence="2">
    <location>
        <begin position="208"/>
        <end position="210"/>
    </location>
</feature>
<feature type="short sequence motif" description="Effector region" evidence="1">
    <location>
        <begin position="37"/>
        <end position="45"/>
    </location>
</feature>
<feature type="binding site" evidence="1">
    <location>
        <begin position="15"/>
        <end position="22"/>
    </location>
    <ligand>
        <name>GTP</name>
        <dbReference type="ChEBI" id="CHEBI:37565"/>
    </ligand>
</feature>
<feature type="binding site" evidence="1">
    <location>
        <begin position="63"/>
        <end position="67"/>
    </location>
    <ligand>
        <name>GTP</name>
        <dbReference type="ChEBI" id="CHEBI:37565"/>
    </ligand>
</feature>
<feature type="binding site" evidence="1">
    <location>
        <begin position="121"/>
        <end position="124"/>
    </location>
    <ligand>
        <name>GTP</name>
        <dbReference type="ChEBI" id="CHEBI:37565"/>
    </ligand>
</feature>
<feature type="modified residue" description="Cysteine methyl ester" evidence="2">
    <location>
        <position position="207"/>
    </location>
</feature>
<feature type="lipid moiety-binding region" description="S-geranylgeranyl cysteine" evidence="1">
    <location>
        <position position="207"/>
    </location>
</feature>
<protein>
    <recommendedName>
        <fullName>Ras-related protein Rab-8</fullName>
    </recommendedName>
    <alternativeName>
        <fullName>ORA2</fullName>
    </alternativeName>
</protein>
<reference key="1">
    <citation type="journal article" date="1991" name="J. Biol. Chem.">
        <title>A family of ras-like GTP-binding proteins expressed in electromotor neurons.</title>
        <authorList>
            <person name="Ngsee J.K."/>
            <person name="Elferink L.A."/>
            <person name="Scheller R.H."/>
        </authorList>
    </citation>
    <scope>NUCLEOTIDE SEQUENCE [MRNA]</scope>
    <source>
        <tissue>Electric lobe</tissue>
    </source>
</reference>
<keyword id="KW-1003">Cell membrane</keyword>
<keyword id="KW-0342">GTP-binding</keyword>
<keyword id="KW-0449">Lipoprotein</keyword>
<keyword id="KW-0472">Membrane</keyword>
<keyword id="KW-0488">Methylation</keyword>
<keyword id="KW-0547">Nucleotide-binding</keyword>
<keyword id="KW-0636">Prenylation</keyword>
<organism>
    <name type="scientific">Diplobatis ommata</name>
    <name type="common">Ocellated electric ray</name>
    <name type="synonym">Discopyge ommata</name>
    <dbReference type="NCBI Taxonomy" id="1870830"/>
    <lineage>
        <taxon>Eukaryota</taxon>
        <taxon>Metazoa</taxon>
        <taxon>Chordata</taxon>
        <taxon>Craniata</taxon>
        <taxon>Vertebrata</taxon>
        <taxon>Chondrichthyes</taxon>
        <taxon>Elasmobranchii</taxon>
        <taxon>Batoidea</taxon>
        <taxon>Torpediniformes</taxon>
        <taxon>Narcinidae</taxon>
        <taxon>Diplobatis</taxon>
    </lineage>
</organism>
<dbReference type="EMBL" id="M38391">
    <property type="protein sequence ID" value="AAA49232.1"/>
    <property type="molecule type" value="mRNA"/>
</dbReference>
<dbReference type="PIR" id="B38625">
    <property type="entry name" value="B38625"/>
</dbReference>
<dbReference type="SMR" id="P22128"/>
<dbReference type="GO" id="GO:0005886">
    <property type="term" value="C:plasma membrane"/>
    <property type="evidence" value="ECO:0007669"/>
    <property type="project" value="UniProtKB-SubCell"/>
</dbReference>
<dbReference type="GO" id="GO:0005525">
    <property type="term" value="F:GTP binding"/>
    <property type="evidence" value="ECO:0007669"/>
    <property type="project" value="UniProtKB-KW"/>
</dbReference>
<dbReference type="GO" id="GO:0003924">
    <property type="term" value="F:GTPase activity"/>
    <property type="evidence" value="ECO:0007669"/>
    <property type="project" value="InterPro"/>
</dbReference>
<dbReference type="CDD" id="cd01867">
    <property type="entry name" value="Rab8_Rab10_Rab13_like"/>
    <property type="match status" value="1"/>
</dbReference>
<dbReference type="FunFam" id="3.40.50.300:FF:000202">
    <property type="entry name" value="ras-related protein Rab-8A"/>
    <property type="match status" value="1"/>
</dbReference>
<dbReference type="Gene3D" id="3.40.50.300">
    <property type="entry name" value="P-loop containing nucleotide triphosphate hydrolases"/>
    <property type="match status" value="1"/>
</dbReference>
<dbReference type="InterPro" id="IPR027417">
    <property type="entry name" value="P-loop_NTPase"/>
</dbReference>
<dbReference type="InterPro" id="IPR005225">
    <property type="entry name" value="Small_GTP-bd"/>
</dbReference>
<dbReference type="InterPro" id="IPR001806">
    <property type="entry name" value="Small_GTPase"/>
</dbReference>
<dbReference type="InterPro" id="IPR050305">
    <property type="entry name" value="Small_GTPase_Rab"/>
</dbReference>
<dbReference type="NCBIfam" id="TIGR00231">
    <property type="entry name" value="small_GTP"/>
    <property type="match status" value="1"/>
</dbReference>
<dbReference type="PANTHER" id="PTHR47980">
    <property type="entry name" value="LD44762P"/>
    <property type="match status" value="1"/>
</dbReference>
<dbReference type="Pfam" id="PF00071">
    <property type="entry name" value="Ras"/>
    <property type="match status" value="1"/>
</dbReference>
<dbReference type="PRINTS" id="PR00449">
    <property type="entry name" value="RASTRNSFRMNG"/>
</dbReference>
<dbReference type="SMART" id="SM00177">
    <property type="entry name" value="ARF"/>
    <property type="match status" value="1"/>
</dbReference>
<dbReference type="SMART" id="SM00175">
    <property type="entry name" value="RAB"/>
    <property type="match status" value="1"/>
</dbReference>
<dbReference type="SMART" id="SM00176">
    <property type="entry name" value="RAN"/>
    <property type="match status" value="1"/>
</dbReference>
<dbReference type="SMART" id="SM00173">
    <property type="entry name" value="RAS"/>
    <property type="match status" value="1"/>
</dbReference>
<dbReference type="SMART" id="SM00174">
    <property type="entry name" value="RHO"/>
    <property type="match status" value="1"/>
</dbReference>
<dbReference type="SUPFAM" id="SSF52540">
    <property type="entry name" value="P-loop containing nucleoside triphosphate hydrolases"/>
    <property type="match status" value="1"/>
</dbReference>
<dbReference type="PROSITE" id="PS51419">
    <property type="entry name" value="RAB"/>
    <property type="match status" value="1"/>
</dbReference>
<evidence type="ECO:0000250" key="1"/>
<evidence type="ECO:0000255" key="2"/>
<evidence type="ECO:0000305" key="3"/>
<comment type="subcellular location">
    <subcellularLocation>
        <location evidence="3">Cell membrane</location>
        <topology evidence="3">Lipid-anchor</topology>
        <orientation evidence="3">Cytoplasmic side</orientation>
    </subcellularLocation>
</comment>
<comment type="similarity">
    <text evidence="3">Belongs to the small GTPase superfamily. Rab family.</text>
</comment>